<keyword id="KW-0963">Cytoplasm</keyword>
<keyword id="KW-0396">Initiation factor</keyword>
<keyword id="KW-0648">Protein biosynthesis</keyword>
<protein>
    <recommendedName>
        <fullName evidence="1">Translation initiation factor IF-3</fullName>
    </recommendedName>
</protein>
<comment type="function">
    <text evidence="1">IF-3 binds to the 30S ribosomal subunit and shifts the equilibrium between 70S ribosomes and their 50S and 30S subunits in favor of the free subunits, thus enhancing the availability of 30S subunits on which protein synthesis initiation begins.</text>
</comment>
<comment type="subunit">
    <text evidence="1">Monomer.</text>
</comment>
<comment type="subcellular location">
    <subcellularLocation>
        <location evidence="1">Cytoplasm</location>
    </subcellularLocation>
</comment>
<comment type="similarity">
    <text evidence="1">Belongs to the IF-3 family.</text>
</comment>
<comment type="sequence caution" evidence="2">
    <conflict type="erroneous initiation">
        <sequence resource="EMBL-CDS" id="AAS43607"/>
    </conflict>
</comment>
<gene>
    <name evidence="1" type="primary">infC</name>
    <name type="ordered locus">BCE_4706</name>
</gene>
<reference key="1">
    <citation type="journal article" date="2004" name="Nucleic Acids Res.">
        <title>The genome sequence of Bacillus cereus ATCC 10987 reveals metabolic adaptations and a large plasmid related to Bacillus anthracis pXO1.</title>
        <authorList>
            <person name="Rasko D.A."/>
            <person name="Ravel J."/>
            <person name="Oekstad O.A."/>
            <person name="Helgason E."/>
            <person name="Cer R.Z."/>
            <person name="Jiang L."/>
            <person name="Shores K.A."/>
            <person name="Fouts D.E."/>
            <person name="Tourasse N.J."/>
            <person name="Angiuoli S.V."/>
            <person name="Kolonay J.F."/>
            <person name="Nelson W.C."/>
            <person name="Kolstoe A.-B."/>
            <person name="Fraser C.M."/>
            <person name="Read T.D."/>
        </authorList>
    </citation>
    <scope>NUCLEOTIDE SEQUENCE [LARGE SCALE GENOMIC DNA]</scope>
    <source>
        <strain>ATCC 10987 / NRS 248</strain>
    </source>
</reference>
<name>IF3_BACC1</name>
<feature type="chain" id="PRO_0000177476" description="Translation initiation factor IF-3">
    <location>
        <begin position="1"/>
        <end position="167"/>
    </location>
</feature>
<organism>
    <name type="scientific">Bacillus cereus (strain ATCC 10987 / NRS 248)</name>
    <dbReference type="NCBI Taxonomy" id="222523"/>
    <lineage>
        <taxon>Bacteria</taxon>
        <taxon>Bacillati</taxon>
        <taxon>Bacillota</taxon>
        <taxon>Bacilli</taxon>
        <taxon>Bacillales</taxon>
        <taxon>Bacillaceae</taxon>
        <taxon>Bacillus</taxon>
        <taxon>Bacillus cereus group</taxon>
    </lineage>
</organism>
<accession>Q72ZG2</accession>
<sequence>MMINEQIRAREVRLVGANGDQLGIKSRNDALDLAANLNLDLVLVAPNAKPPVCRIMDYGKFRFEQQKKEKEQRKNQKVISMKEVRLSPTIDEHDFNTKLRNAIKFLEKGDKVKASIRFKGRAITHKEIGQRVLDRFSEACAEVSTIESKPKMEGRSMFLVLAPKNDK</sequence>
<proteinExistence type="inferred from homology"/>
<dbReference type="EMBL" id="AE017194">
    <property type="protein sequence ID" value="AAS43607.1"/>
    <property type="status" value="ALT_INIT"/>
    <property type="molecule type" value="Genomic_DNA"/>
</dbReference>
<dbReference type="SMR" id="Q72ZG2"/>
<dbReference type="KEGG" id="bca:BCE_4706"/>
<dbReference type="HOGENOM" id="CLU_054919_3_2_9"/>
<dbReference type="Proteomes" id="UP000002527">
    <property type="component" value="Chromosome"/>
</dbReference>
<dbReference type="GO" id="GO:0005829">
    <property type="term" value="C:cytosol"/>
    <property type="evidence" value="ECO:0007669"/>
    <property type="project" value="TreeGrafter"/>
</dbReference>
<dbReference type="GO" id="GO:0016020">
    <property type="term" value="C:membrane"/>
    <property type="evidence" value="ECO:0007669"/>
    <property type="project" value="TreeGrafter"/>
</dbReference>
<dbReference type="GO" id="GO:0043022">
    <property type="term" value="F:ribosome binding"/>
    <property type="evidence" value="ECO:0007669"/>
    <property type="project" value="TreeGrafter"/>
</dbReference>
<dbReference type="GO" id="GO:0003743">
    <property type="term" value="F:translation initiation factor activity"/>
    <property type="evidence" value="ECO:0007669"/>
    <property type="project" value="UniProtKB-UniRule"/>
</dbReference>
<dbReference type="GO" id="GO:0032790">
    <property type="term" value="P:ribosome disassembly"/>
    <property type="evidence" value="ECO:0007669"/>
    <property type="project" value="TreeGrafter"/>
</dbReference>
<dbReference type="FunFam" id="3.10.20.80:FF:000001">
    <property type="entry name" value="Translation initiation factor IF-3"/>
    <property type="match status" value="1"/>
</dbReference>
<dbReference type="FunFam" id="3.30.110.10:FF:000001">
    <property type="entry name" value="Translation initiation factor IF-3"/>
    <property type="match status" value="1"/>
</dbReference>
<dbReference type="Gene3D" id="3.30.110.10">
    <property type="entry name" value="Translation initiation factor 3 (IF-3), C-terminal domain"/>
    <property type="match status" value="1"/>
</dbReference>
<dbReference type="Gene3D" id="3.10.20.80">
    <property type="entry name" value="Translation initiation factor 3 (IF-3), N-terminal domain"/>
    <property type="match status" value="1"/>
</dbReference>
<dbReference type="HAMAP" id="MF_00080">
    <property type="entry name" value="IF_3"/>
    <property type="match status" value="1"/>
</dbReference>
<dbReference type="InterPro" id="IPR036788">
    <property type="entry name" value="T_IF-3_C_sf"/>
</dbReference>
<dbReference type="InterPro" id="IPR036787">
    <property type="entry name" value="T_IF-3_N_sf"/>
</dbReference>
<dbReference type="InterPro" id="IPR019813">
    <property type="entry name" value="Translation_initiation_fac3_CS"/>
</dbReference>
<dbReference type="InterPro" id="IPR001288">
    <property type="entry name" value="Translation_initiation_fac_3"/>
</dbReference>
<dbReference type="InterPro" id="IPR019815">
    <property type="entry name" value="Translation_initiation_fac_3_C"/>
</dbReference>
<dbReference type="InterPro" id="IPR019814">
    <property type="entry name" value="Translation_initiation_fac_3_N"/>
</dbReference>
<dbReference type="NCBIfam" id="TIGR00168">
    <property type="entry name" value="infC"/>
    <property type="match status" value="1"/>
</dbReference>
<dbReference type="PANTHER" id="PTHR10938">
    <property type="entry name" value="TRANSLATION INITIATION FACTOR IF-3"/>
    <property type="match status" value="1"/>
</dbReference>
<dbReference type="PANTHER" id="PTHR10938:SF0">
    <property type="entry name" value="TRANSLATION INITIATION FACTOR IF-3, MITOCHONDRIAL"/>
    <property type="match status" value="1"/>
</dbReference>
<dbReference type="Pfam" id="PF00707">
    <property type="entry name" value="IF3_C"/>
    <property type="match status" value="1"/>
</dbReference>
<dbReference type="Pfam" id="PF05198">
    <property type="entry name" value="IF3_N"/>
    <property type="match status" value="1"/>
</dbReference>
<dbReference type="SUPFAM" id="SSF55200">
    <property type="entry name" value="Translation initiation factor IF3, C-terminal domain"/>
    <property type="match status" value="1"/>
</dbReference>
<dbReference type="SUPFAM" id="SSF54364">
    <property type="entry name" value="Translation initiation factor IF3, N-terminal domain"/>
    <property type="match status" value="1"/>
</dbReference>
<dbReference type="PROSITE" id="PS00938">
    <property type="entry name" value="IF3"/>
    <property type="match status" value="1"/>
</dbReference>
<evidence type="ECO:0000255" key="1">
    <source>
        <dbReference type="HAMAP-Rule" id="MF_00080"/>
    </source>
</evidence>
<evidence type="ECO:0000305" key="2"/>